<evidence type="ECO:0000255" key="1">
    <source>
        <dbReference type="HAMAP-Rule" id="MF_00376"/>
    </source>
</evidence>
<evidence type="ECO:0000305" key="2"/>
<name>COAE_RHORT</name>
<reference key="1">
    <citation type="journal article" date="2011" name="Stand. Genomic Sci.">
        <title>Complete genome sequence of Rhodospirillum rubrum type strain (S1).</title>
        <authorList>
            <person name="Munk A.C."/>
            <person name="Copeland A."/>
            <person name="Lucas S."/>
            <person name="Lapidus A."/>
            <person name="Del Rio T.G."/>
            <person name="Barry K."/>
            <person name="Detter J.C."/>
            <person name="Hammon N."/>
            <person name="Israni S."/>
            <person name="Pitluck S."/>
            <person name="Brettin T."/>
            <person name="Bruce D."/>
            <person name="Han C."/>
            <person name="Tapia R."/>
            <person name="Gilna P."/>
            <person name="Schmutz J."/>
            <person name="Larimer F."/>
            <person name="Land M."/>
            <person name="Kyrpides N.C."/>
            <person name="Mavromatis K."/>
            <person name="Richardson P."/>
            <person name="Rohde M."/>
            <person name="Goeker M."/>
            <person name="Klenk H.P."/>
            <person name="Zhang Y."/>
            <person name="Roberts G.P."/>
            <person name="Reslewic S."/>
            <person name="Schwartz D.C."/>
        </authorList>
    </citation>
    <scope>NUCLEOTIDE SEQUENCE [LARGE SCALE GENOMIC DNA]</scope>
    <source>
        <strain>ATCC 11170 / ATH 1.1.1 / DSM 467 / LMG 4362 / NCIMB 8255 / S1</strain>
    </source>
</reference>
<comment type="function">
    <text evidence="1">Catalyzes the phosphorylation of the 3'-hydroxyl group of dephosphocoenzyme A to form coenzyme A.</text>
</comment>
<comment type="catalytic activity">
    <reaction evidence="1">
        <text>3'-dephospho-CoA + ATP = ADP + CoA + H(+)</text>
        <dbReference type="Rhea" id="RHEA:18245"/>
        <dbReference type="ChEBI" id="CHEBI:15378"/>
        <dbReference type="ChEBI" id="CHEBI:30616"/>
        <dbReference type="ChEBI" id="CHEBI:57287"/>
        <dbReference type="ChEBI" id="CHEBI:57328"/>
        <dbReference type="ChEBI" id="CHEBI:456216"/>
        <dbReference type="EC" id="2.7.1.24"/>
    </reaction>
</comment>
<comment type="pathway">
    <text evidence="1">Cofactor biosynthesis; coenzyme A biosynthesis; CoA from (R)-pantothenate: step 5/5.</text>
</comment>
<comment type="subcellular location">
    <subcellularLocation>
        <location evidence="1">Cytoplasm</location>
    </subcellularLocation>
</comment>
<comment type="similarity">
    <text evidence="1">Belongs to the CoaE family.</text>
</comment>
<comment type="sequence caution" evidence="2">
    <conflict type="erroneous initiation">
        <sequence resource="EMBL-CDS" id="ABC24406"/>
    </conflict>
</comment>
<accession>Q2RN89</accession>
<gene>
    <name evidence="1" type="primary">coaE</name>
    <name type="ordered locus">Rru_A3612</name>
</gene>
<proteinExistence type="inferred from homology"/>
<sequence>MIIGLTGSIGMGKSTLARMARRLGVAVHDADATVHALLGRRGAAVAAVLAAFPGVGTLTEGIDRKALGARVFGRPPALARLEAILHPLVRRREAAFLRCCGLGRRKVVILDVPLLFETGGEHRCDRVMVVSAPAFLQSQRVLRRPGMTAALLADIRARQTPEVVKRLNAEAVVPTGLGPRPALRALRANLTMARSGVRRWRRGKRTYRPHA</sequence>
<organism>
    <name type="scientific">Rhodospirillum rubrum (strain ATCC 11170 / ATH 1.1.1 / DSM 467 / LMG 4362 / NCIMB 8255 / S1)</name>
    <dbReference type="NCBI Taxonomy" id="269796"/>
    <lineage>
        <taxon>Bacteria</taxon>
        <taxon>Pseudomonadati</taxon>
        <taxon>Pseudomonadota</taxon>
        <taxon>Alphaproteobacteria</taxon>
        <taxon>Rhodospirillales</taxon>
        <taxon>Rhodospirillaceae</taxon>
        <taxon>Rhodospirillum</taxon>
    </lineage>
</organism>
<dbReference type="EC" id="2.7.1.24" evidence="1"/>
<dbReference type="EMBL" id="CP000230">
    <property type="protein sequence ID" value="ABC24406.1"/>
    <property type="status" value="ALT_INIT"/>
    <property type="molecule type" value="Genomic_DNA"/>
</dbReference>
<dbReference type="RefSeq" id="YP_428693.1">
    <property type="nucleotide sequence ID" value="NC_007643.1"/>
</dbReference>
<dbReference type="SMR" id="Q2RN89"/>
<dbReference type="STRING" id="269796.Rru_A3612"/>
<dbReference type="EnsemblBacteria" id="ABC24406">
    <property type="protein sequence ID" value="ABC24406"/>
    <property type="gene ID" value="Rru_A3612"/>
</dbReference>
<dbReference type="KEGG" id="rru:Rru_A3612"/>
<dbReference type="PATRIC" id="fig|269796.9.peg.3733"/>
<dbReference type="eggNOG" id="COG0237">
    <property type="taxonomic scope" value="Bacteria"/>
</dbReference>
<dbReference type="HOGENOM" id="CLU_057180_3_0_5"/>
<dbReference type="PhylomeDB" id="Q2RN89"/>
<dbReference type="UniPathway" id="UPA00241">
    <property type="reaction ID" value="UER00356"/>
</dbReference>
<dbReference type="Proteomes" id="UP000001929">
    <property type="component" value="Chromosome"/>
</dbReference>
<dbReference type="GO" id="GO:0005737">
    <property type="term" value="C:cytoplasm"/>
    <property type="evidence" value="ECO:0007669"/>
    <property type="project" value="UniProtKB-SubCell"/>
</dbReference>
<dbReference type="GO" id="GO:0005524">
    <property type="term" value="F:ATP binding"/>
    <property type="evidence" value="ECO:0007669"/>
    <property type="project" value="UniProtKB-UniRule"/>
</dbReference>
<dbReference type="GO" id="GO:0004140">
    <property type="term" value="F:dephospho-CoA kinase activity"/>
    <property type="evidence" value="ECO:0007669"/>
    <property type="project" value="UniProtKB-UniRule"/>
</dbReference>
<dbReference type="GO" id="GO:0015937">
    <property type="term" value="P:coenzyme A biosynthetic process"/>
    <property type="evidence" value="ECO:0007669"/>
    <property type="project" value="UniProtKB-UniRule"/>
</dbReference>
<dbReference type="CDD" id="cd02022">
    <property type="entry name" value="DPCK"/>
    <property type="match status" value="1"/>
</dbReference>
<dbReference type="Gene3D" id="3.40.50.300">
    <property type="entry name" value="P-loop containing nucleotide triphosphate hydrolases"/>
    <property type="match status" value="1"/>
</dbReference>
<dbReference type="HAMAP" id="MF_00376">
    <property type="entry name" value="Dephospho_CoA_kinase"/>
    <property type="match status" value="1"/>
</dbReference>
<dbReference type="InterPro" id="IPR001977">
    <property type="entry name" value="Depp_CoAkinase"/>
</dbReference>
<dbReference type="InterPro" id="IPR027417">
    <property type="entry name" value="P-loop_NTPase"/>
</dbReference>
<dbReference type="NCBIfam" id="TIGR00152">
    <property type="entry name" value="dephospho-CoA kinase"/>
    <property type="match status" value="1"/>
</dbReference>
<dbReference type="PANTHER" id="PTHR10695:SF46">
    <property type="entry name" value="BIFUNCTIONAL COENZYME A SYNTHASE-RELATED"/>
    <property type="match status" value="1"/>
</dbReference>
<dbReference type="PANTHER" id="PTHR10695">
    <property type="entry name" value="DEPHOSPHO-COA KINASE-RELATED"/>
    <property type="match status" value="1"/>
</dbReference>
<dbReference type="Pfam" id="PF01121">
    <property type="entry name" value="CoaE"/>
    <property type="match status" value="1"/>
</dbReference>
<dbReference type="SUPFAM" id="SSF52540">
    <property type="entry name" value="P-loop containing nucleoside triphosphate hydrolases"/>
    <property type="match status" value="1"/>
</dbReference>
<dbReference type="PROSITE" id="PS51219">
    <property type="entry name" value="DPCK"/>
    <property type="match status" value="1"/>
</dbReference>
<protein>
    <recommendedName>
        <fullName evidence="1">Dephospho-CoA kinase</fullName>
        <ecNumber evidence="1">2.7.1.24</ecNumber>
    </recommendedName>
    <alternativeName>
        <fullName evidence="1">Dephosphocoenzyme A kinase</fullName>
    </alternativeName>
</protein>
<feature type="chain" id="PRO_0000243331" description="Dephospho-CoA kinase">
    <location>
        <begin position="1"/>
        <end position="211"/>
    </location>
</feature>
<feature type="domain" description="DPCK" evidence="1">
    <location>
        <begin position="2"/>
        <end position="204"/>
    </location>
</feature>
<feature type="binding site" evidence="1">
    <location>
        <begin position="10"/>
        <end position="15"/>
    </location>
    <ligand>
        <name>ATP</name>
        <dbReference type="ChEBI" id="CHEBI:30616"/>
    </ligand>
</feature>
<keyword id="KW-0067">ATP-binding</keyword>
<keyword id="KW-0173">Coenzyme A biosynthesis</keyword>
<keyword id="KW-0963">Cytoplasm</keyword>
<keyword id="KW-0418">Kinase</keyword>
<keyword id="KW-0547">Nucleotide-binding</keyword>
<keyword id="KW-1185">Reference proteome</keyword>
<keyword id="KW-0808">Transferase</keyword>